<name>RNPA_PROMT</name>
<evidence type="ECO:0000255" key="1">
    <source>
        <dbReference type="HAMAP-Rule" id="MF_00227"/>
    </source>
</evidence>
<organism>
    <name type="scientific">Prochlorococcus marinus (strain NATL2A)</name>
    <dbReference type="NCBI Taxonomy" id="59920"/>
    <lineage>
        <taxon>Bacteria</taxon>
        <taxon>Bacillati</taxon>
        <taxon>Cyanobacteriota</taxon>
        <taxon>Cyanophyceae</taxon>
        <taxon>Synechococcales</taxon>
        <taxon>Prochlorococcaceae</taxon>
        <taxon>Prochlorococcus</taxon>
    </lineage>
</organism>
<reference key="1">
    <citation type="journal article" date="2007" name="PLoS Genet.">
        <title>Patterns and implications of gene gain and loss in the evolution of Prochlorococcus.</title>
        <authorList>
            <person name="Kettler G.C."/>
            <person name="Martiny A.C."/>
            <person name="Huang K."/>
            <person name="Zucker J."/>
            <person name="Coleman M.L."/>
            <person name="Rodrigue S."/>
            <person name="Chen F."/>
            <person name="Lapidus A."/>
            <person name="Ferriera S."/>
            <person name="Johnson J."/>
            <person name="Steglich C."/>
            <person name="Church G.M."/>
            <person name="Richardson P."/>
            <person name="Chisholm S.W."/>
        </authorList>
    </citation>
    <scope>NUCLEOTIDE SEQUENCE [LARGE SCALE GENOMIC DNA]</scope>
    <source>
        <strain>NATL2A</strain>
    </source>
</reference>
<accession>Q46JN4</accession>
<gene>
    <name evidence="1" type="primary">rnpA</name>
    <name type="ordered locus">PMN2A_0803</name>
</gene>
<keyword id="KW-0255">Endonuclease</keyword>
<keyword id="KW-0378">Hydrolase</keyword>
<keyword id="KW-0540">Nuclease</keyword>
<keyword id="KW-1185">Reference proteome</keyword>
<keyword id="KW-0694">RNA-binding</keyword>
<keyword id="KW-0819">tRNA processing</keyword>
<protein>
    <recommendedName>
        <fullName evidence="1">Ribonuclease P protein component</fullName>
        <shortName evidence="1">RNase P protein</shortName>
        <shortName evidence="1">RNaseP protein</shortName>
        <ecNumber evidence="1">3.1.26.5</ecNumber>
    </recommendedName>
    <alternativeName>
        <fullName evidence="1">Protein C5</fullName>
    </alternativeName>
</protein>
<sequence length="128" mass="14748">MVLPKHMRLKGHRCFDFIYKEGSRFYSSSMVLRVTDANKKPQVKGKQSKTRHSIKCAISISNKVSKKSVTRNKLRRLFHHHLSLRLSNMACDNEIWAFISLKPSCMKNPDSTLLKECDKLLTKAGITK</sequence>
<proteinExistence type="inferred from homology"/>
<feature type="chain" id="PRO_1000194664" description="Ribonuclease P protein component">
    <location>
        <begin position="1"/>
        <end position="128"/>
    </location>
</feature>
<dbReference type="EC" id="3.1.26.5" evidence="1"/>
<dbReference type="EMBL" id="CP000095">
    <property type="protein sequence ID" value="AAZ58294.1"/>
    <property type="molecule type" value="Genomic_DNA"/>
</dbReference>
<dbReference type="RefSeq" id="WP_011294891.1">
    <property type="nucleotide sequence ID" value="NC_007335.2"/>
</dbReference>
<dbReference type="SMR" id="Q46JN4"/>
<dbReference type="STRING" id="59920.PMN2A_0803"/>
<dbReference type="KEGG" id="pmn:PMN2A_0803"/>
<dbReference type="HOGENOM" id="CLU_117179_2_0_3"/>
<dbReference type="OrthoDB" id="540358at2"/>
<dbReference type="PhylomeDB" id="Q46JN4"/>
<dbReference type="Proteomes" id="UP000002535">
    <property type="component" value="Chromosome"/>
</dbReference>
<dbReference type="GO" id="GO:0030677">
    <property type="term" value="C:ribonuclease P complex"/>
    <property type="evidence" value="ECO:0007669"/>
    <property type="project" value="TreeGrafter"/>
</dbReference>
<dbReference type="GO" id="GO:0042781">
    <property type="term" value="F:3'-tRNA processing endoribonuclease activity"/>
    <property type="evidence" value="ECO:0007669"/>
    <property type="project" value="TreeGrafter"/>
</dbReference>
<dbReference type="GO" id="GO:0004526">
    <property type="term" value="F:ribonuclease P activity"/>
    <property type="evidence" value="ECO:0007669"/>
    <property type="project" value="UniProtKB-UniRule"/>
</dbReference>
<dbReference type="GO" id="GO:0000049">
    <property type="term" value="F:tRNA binding"/>
    <property type="evidence" value="ECO:0007669"/>
    <property type="project" value="UniProtKB-UniRule"/>
</dbReference>
<dbReference type="GO" id="GO:0001682">
    <property type="term" value="P:tRNA 5'-leader removal"/>
    <property type="evidence" value="ECO:0007669"/>
    <property type="project" value="UniProtKB-UniRule"/>
</dbReference>
<dbReference type="Gene3D" id="3.30.230.10">
    <property type="match status" value="1"/>
</dbReference>
<dbReference type="HAMAP" id="MF_00227">
    <property type="entry name" value="RNase_P"/>
    <property type="match status" value="1"/>
</dbReference>
<dbReference type="InterPro" id="IPR020568">
    <property type="entry name" value="Ribosomal_Su5_D2-typ_SF"/>
</dbReference>
<dbReference type="InterPro" id="IPR014721">
    <property type="entry name" value="Ribsml_uS5_D2-typ_fold_subgr"/>
</dbReference>
<dbReference type="InterPro" id="IPR000100">
    <property type="entry name" value="RNase_P"/>
</dbReference>
<dbReference type="NCBIfam" id="TIGR00188">
    <property type="entry name" value="rnpA"/>
    <property type="match status" value="1"/>
</dbReference>
<dbReference type="PANTHER" id="PTHR33992">
    <property type="entry name" value="RIBONUCLEASE P PROTEIN COMPONENT"/>
    <property type="match status" value="1"/>
</dbReference>
<dbReference type="PANTHER" id="PTHR33992:SF1">
    <property type="entry name" value="RIBONUCLEASE P PROTEIN COMPONENT"/>
    <property type="match status" value="1"/>
</dbReference>
<dbReference type="Pfam" id="PF00825">
    <property type="entry name" value="Ribonuclease_P"/>
    <property type="match status" value="1"/>
</dbReference>
<dbReference type="SUPFAM" id="SSF54211">
    <property type="entry name" value="Ribosomal protein S5 domain 2-like"/>
    <property type="match status" value="1"/>
</dbReference>
<comment type="function">
    <text evidence="1">RNaseP catalyzes the removal of the 5'-leader sequence from pre-tRNA to produce the mature 5'-terminus. It can also cleave other RNA substrates such as 4.5S RNA. The protein component plays an auxiliary but essential role in vivo by binding to the 5'-leader sequence and broadening the substrate specificity of the ribozyme.</text>
</comment>
<comment type="catalytic activity">
    <reaction evidence="1">
        <text>Endonucleolytic cleavage of RNA, removing 5'-extranucleotides from tRNA precursor.</text>
        <dbReference type="EC" id="3.1.26.5"/>
    </reaction>
</comment>
<comment type="subunit">
    <text evidence="1">Consists of a catalytic RNA component (M1 or rnpB) and a protein subunit.</text>
</comment>
<comment type="similarity">
    <text evidence="1">Belongs to the RnpA family.</text>
</comment>